<organism>
    <name type="scientific">Alkaliphilus oremlandii (strain OhILAs)</name>
    <name type="common">Clostridium oremlandii (strain OhILAs)</name>
    <dbReference type="NCBI Taxonomy" id="350688"/>
    <lineage>
        <taxon>Bacteria</taxon>
        <taxon>Bacillati</taxon>
        <taxon>Bacillota</taxon>
        <taxon>Clostridia</taxon>
        <taxon>Peptostreptococcales</taxon>
        <taxon>Natronincolaceae</taxon>
        <taxon>Alkaliphilus</taxon>
    </lineage>
</organism>
<dbReference type="EMBL" id="CP000853">
    <property type="protein sequence ID" value="ABW18011.1"/>
    <property type="molecule type" value="Genomic_DNA"/>
</dbReference>
<dbReference type="RefSeq" id="WP_012158326.1">
    <property type="nucleotide sequence ID" value="NC_009922.1"/>
</dbReference>
<dbReference type="SMR" id="A8MLU4"/>
<dbReference type="STRING" id="350688.Clos_0449"/>
<dbReference type="KEGG" id="aoe:Clos_0449"/>
<dbReference type="eggNOG" id="COG0782">
    <property type="taxonomic scope" value="Bacteria"/>
</dbReference>
<dbReference type="HOGENOM" id="CLU_101379_2_1_9"/>
<dbReference type="OrthoDB" id="9808774at2"/>
<dbReference type="Proteomes" id="UP000000269">
    <property type="component" value="Chromosome"/>
</dbReference>
<dbReference type="GO" id="GO:0003677">
    <property type="term" value="F:DNA binding"/>
    <property type="evidence" value="ECO:0007669"/>
    <property type="project" value="UniProtKB-UniRule"/>
</dbReference>
<dbReference type="GO" id="GO:0070063">
    <property type="term" value="F:RNA polymerase binding"/>
    <property type="evidence" value="ECO:0007669"/>
    <property type="project" value="InterPro"/>
</dbReference>
<dbReference type="GO" id="GO:0006354">
    <property type="term" value="P:DNA-templated transcription elongation"/>
    <property type="evidence" value="ECO:0007669"/>
    <property type="project" value="TreeGrafter"/>
</dbReference>
<dbReference type="GO" id="GO:0032784">
    <property type="term" value="P:regulation of DNA-templated transcription elongation"/>
    <property type="evidence" value="ECO:0007669"/>
    <property type="project" value="UniProtKB-UniRule"/>
</dbReference>
<dbReference type="FunFam" id="1.10.287.180:FF:000001">
    <property type="entry name" value="Transcription elongation factor GreA"/>
    <property type="match status" value="1"/>
</dbReference>
<dbReference type="FunFam" id="3.10.50.30:FF:000001">
    <property type="entry name" value="Transcription elongation factor GreA"/>
    <property type="match status" value="1"/>
</dbReference>
<dbReference type="Gene3D" id="3.10.50.30">
    <property type="entry name" value="Transcription elongation factor, GreA/GreB, C-terminal domain"/>
    <property type="match status" value="1"/>
</dbReference>
<dbReference type="Gene3D" id="1.10.287.180">
    <property type="entry name" value="Transcription elongation factor, GreA/GreB, N-terminal domain"/>
    <property type="match status" value="1"/>
</dbReference>
<dbReference type="HAMAP" id="MF_00105">
    <property type="entry name" value="GreA_GreB"/>
    <property type="match status" value="1"/>
</dbReference>
<dbReference type="InterPro" id="IPR036953">
    <property type="entry name" value="GreA/GreB_C_sf"/>
</dbReference>
<dbReference type="InterPro" id="IPR018151">
    <property type="entry name" value="TF_GreA/GreB_CS"/>
</dbReference>
<dbReference type="InterPro" id="IPR006359">
    <property type="entry name" value="Tscrpt_elong_fac_GreA"/>
</dbReference>
<dbReference type="InterPro" id="IPR028624">
    <property type="entry name" value="Tscrpt_elong_fac_GreA/B"/>
</dbReference>
<dbReference type="InterPro" id="IPR001437">
    <property type="entry name" value="Tscrpt_elong_fac_GreA/B_C"/>
</dbReference>
<dbReference type="InterPro" id="IPR023459">
    <property type="entry name" value="Tscrpt_elong_fac_GreA/B_fam"/>
</dbReference>
<dbReference type="InterPro" id="IPR022691">
    <property type="entry name" value="Tscrpt_elong_fac_GreA/B_N"/>
</dbReference>
<dbReference type="InterPro" id="IPR036805">
    <property type="entry name" value="Tscrpt_elong_fac_GreA/B_N_sf"/>
</dbReference>
<dbReference type="NCBIfam" id="TIGR01462">
    <property type="entry name" value="greA"/>
    <property type="match status" value="1"/>
</dbReference>
<dbReference type="NCBIfam" id="NF001263">
    <property type="entry name" value="PRK00226.1-4"/>
    <property type="match status" value="1"/>
</dbReference>
<dbReference type="PANTHER" id="PTHR30437">
    <property type="entry name" value="TRANSCRIPTION ELONGATION FACTOR GREA"/>
    <property type="match status" value="1"/>
</dbReference>
<dbReference type="PANTHER" id="PTHR30437:SF4">
    <property type="entry name" value="TRANSCRIPTION ELONGATION FACTOR GREA"/>
    <property type="match status" value="1"/>
</dbReference>
<dbReference type="Pfam" id="PF01272">
    <property type="entry name" value="GreA_GreB"/>
    <property type="match status" value="1"/>
</dbReference>
<dbReference type="Pfam" id="PF03449">
    <property type="entry name" value="GreA_GreB_N"/>
    <property type="match status" value="1"/>
</dbReference>
<dbReference type="PIRSF" id="PIRSF006092">
    <property type="entry name" value="GreA_GreB"/>
    <property type="match status" value="1"/>
</dbReference>
<dbReference type="SUPFAM" id="SSF54534">
    <property type="entry name" value="FKBP-like"/>
    <property type="match status" value="1"/>
</dbReference>
<dbReference type="SUPFAM" id="SSF46557">
    <property type="entry name" value="GreA transcript cleavage protein, N-terminal domain"/>
    <property type="match status" value="1"/>
</dbReference>
<dbReference type="PROSITE" id="PS00829">
    <property type="entry name" value="GREAB_1"/>
    <property type="match status" value="1"/>
</dbReference>
<dbReference type="PROSITE" id="PS00830">
    <property type="entry name" value="GREAB_2"/>
    <property type="match status" value="1"/>
</dbReference>
<reference key="1">
    <citation type="submission" date="2007-10" db="EMBL/GenBank/DDBJ databases">
        <title>Complete genome of Alkaliphilus oremlandii OhILAs.</title>
        <authorList>
            <person name="Copeland A."/>
            <person name="Lucas S."/>
            <person name="Lapidus A."/>
            <person name="Barry K."/>
            <person name="Detter J.C."/>
            <person name="Glavina del Rio T."/>
            <person name="Hammon N."/>
            <person name="Israni S."/>
            <person name="Dalin E."/>
            <person name="Tice H."/>
            <person name="Pitluck S."/>
            <person name="Chain P."/>
            <person name="Malfatti S."/>
            <person name="Shin M."/>
            <person name="Vergez L."/>
            <person name="Schmutz J."/>
            <person name="Larimer F."/>
            <person name="Land M."/>
            <person name="Hauser L."/>
            <person name="Kyrpides N."/>
            <person name="Mikhailova N."/>
            <person name="Stolz J.F."/>
            <person name="Dawson A."/>
            <person name="Fisher E."/>
            <person name="Crable B."/>
            <person name="Perera E."/>
            <person name="Lisak J."/>
            <person name="Ranganathan M."/>
            <person name="Basu P."/>
            <person name="Richardson P."/>
        </authorList>
    </citation>
    <scope>NUCLEOTIDE SEQUENCE [LARGE SCALE GENOMIC DNA]</scope>
    <source>
        <strain>OhILAs</strain>
    </source>
</reference>
<accession>A8MLU4</accession>
<keyword id="KW-0175">Coiled coil</keyword>
<keyword id="KW-0238">DNA-binding</keyword>
<keyword id="KW-1185">Reference proteome</keyword>
<keyword id="KW-0804">Transcription</keyword>
<keyword id="KW-0805">Transcription regulation</keyword>
<comment type="function">
    <text evidence="1">Necessary for efficient RNA polymerase transcription elongation past template-encoded arresting sites. The arresting sites in DNA have the property of trapping a certain fraction of elongating RNA polymerases that pass through, resulting in locked ternary complexes. Cleavage of the nascent transcript by cleavage factors such as GreA or GreB allows the resumption of elongation from the new 3'terminus. GreA releases sequences of 2 to 3 nucleotides.</text>
</comment>
<comment type="similarity">
    <text evidence="1">Belongs to the GreA/GreB family.</text>
</comment>
<proteinExistence type="inferred from homology"/>
<protein>
    <recommendedName>
        <fullName evidence="1">Transcription elongation factor GreA</fullName>
    </recommendedName>
    <alternativeName>
        <fullName evidence="1">Transcript cleavage factor GreA</fullName>
    </alternativeName>
</protein>
<name>GREA_ALKOO</name>
<gene>
    <name evidence="1" type="primary">greA</name>
    <name type="ordered locus">Clos_0449</name>
</gene>
<feature type="chain" id="PRO_1000057698" description="Transcription elongation factor GreA">
    <location>
        <begin position="1"/>
        <end position="159"/>
    </location>
</feature>
<feature type="coiled-coil region" evidence="1">
    <location>
        <begin position="5"/>
        <end position="77"/>
    </location>
</feature>
<evidence type="ECO:0000255" key="1">
    <source>
        <dbReference type="HAMAP-Rule" id="MF_00105"/>
    </source>
</evidence>
<sequence>MMADREVVLTAQGLKKLEDELELLKTVRRKEIAERIKQAIAFGDISENSEYDEAKNEQAQVEDRINKLETMLRKAVIIDEEDINTDIVSIGSIVQVNDLEFDEIVEYTIVGSTEADPYELKISNESPVGRALLGTKVGDVVEVQIPDGVTKYEILKITR</sequence>